<reference key="1">
    <citation type="journal article" date="2008" name="PLoS Genet.">
        <title>Genomic islands in the pathogenic filamentous fungus Aspergillus fumigatus.</title>
        <authorList>
            <person name="Fedorova N.D."/>
            <person name="Khaldi N."/>
            <person name="Joardar V.S."/>
            <person name="Maiti R."/>
            <person name="Amedeo P."/>
            <person name="Anderson M.J."/>
            <person name="Crabtree J."/>
            <person name="Silva J.C."/>
            <person name="Badger J.H."/>
            <person name="Albarraq A."/>
            <person name="Angiuoli S."/>
            <person name="Bussey H."/>
            <person name="Bowyer P."/>
            <person name="Cotty P.J."/>
            <person name="Dyer P.S."/>
            <person name="Egan A."/>
            <person name="Galens K."/>
            <person name="Fraser-Liggett C.M."/>
            <person name="Haas B.J."/>
            <person name="Inman J.M."/>
            <person name="Kent R."/>
            <person name="Lemieux S."/>
            <person name="Malavazi I."/>
            <person name="Orvis J."/>
            <person name="Roemer T."/>
            <person name="Ronning C.M."/>
            <person name="Sundaram J.P."/>
            <person name="Sutton G."/>
            <person name="Turner G."/>
            <person name="Venter J.C."/>
            <person name="White O.R."/>
            <person name="Whitty B.R."/>
            <person name="Youngman P."/>
            <person name="Wolfe K.H."/>
            <person name="Goldman G.H."/>
            <person name="Wortman J.R."/>
            <person name="Jiang B."/>
            <person name="Denning D.W."/>
            <person name="Nierman W.C."/>
        </authorList>
    </citation>
    <scope>NUCLEOTIDE SEQUENCE [LARGE SCALE GENOMIC DNA]</scope>
    <source>
        <strain>CBS 144.89 / FGSC A1163 / CEA10</strain>
    </source>
</reference>
<proteinExistence type="inferred from homology"/>
<organism>
    <name type="scientific">Aspergillus fumigatus (strain CBS 144.89 / FGSC A1163 / CEA10)</name>
    <name type="common">Neosartorya fumigata</name>
    <dbReference type="NCBI Taxonomy" id="451804"/>
    <lineage>
        <taxon>Eukaryota</taxon>
        <taxon>Fungi</taxon>
        <taxon>Dikarya</taxon>
        <taxon>Ascomycota</taxon>
        <taxon>Pezizomycotina</taxon>
        <taxon>Eurotiomycetes</taxon>
        <taxon>Eurotiomycetidae</taxon>
        <taxon>Eurotiales</taxon>
        <taxon>Aspergillaceae</taxon>
        <taxon>Aspergillus</taxon>
        <taxon>Aspergillus subgen. Fumigati</taxon>
    </lineage>
</organism>
<dbReference type="EMBL" id="DS499598">
    <property type="protein sequence ID" value="EDP50189.1"/>
    <property type="molecule type" value="Genomic_DNA"/>
</dbReference>
<dbReference type="SMR" id="B0Y604"/>
<dbReference type="EnsemblFungi" id="EDP50189">
    <property type="protein sequence ID" value="EDP50189"/>
    <property type="gene ID" value="AFUB_065210"/>
</dbReference>
<dbReference type="VEuPathDB" id="FungiDB:AFUB_065210"/>
<dbReference type="HOGENOM" id="CLU_002794_4_1_1"/>
<dbReference type="OrthoDB" id="39464at5052"/>
<dbReference type="PhylomeDB" id="B0Y604"/>
<dbReference type="UniPathway" id="UPA00345"/>
<dbReference type="Proteomes" id="UP000001699">
    <property type="component" value="Unassembled WGS sequence"/>
</dbReference>
<dbReference type="GO" id="GO:0005739">
    <property type="term" value="C:mitochondrion"/>
    <property type="evidence" value="ECO:0007669"/>
    <property type="project" value="UniProtKB-SubCell"/>
</dbReference>
<dbReference type="GO" id="GO:0005525">
    <property type="term" value="F:GTP binding"/>
    <property type="evidence" value="ECO:0007669"/>
    <property type="project" value="UniProtKB-UniRule"/>
</dbReference>
<dbReference type="GO" id="GO:0003924">
    <property type="term" value="F:GTPase activity"/>
    <property type="evidence" value="ECO:0007669"/>
    <property type="project" value="UniProtKB-UniRule"/>
</dbReference>
<dbReference type="GO" id="GO:0003746">
    <property type="term" value="F:translation elongation factor activity"/>
    <property type="evidence" value="ECO:0007669"/>
    <property type="project" value="UniProtKB-UniRule"/>
</dbReference>
<dbReference type="GO" id="GO:0070125">
    <property type="term" value="P:mitochondrial translational elongation"/>
    <property type="evidence" value="ECO:0007669"/>
    <property type="project" value="UniProtKB-UniRule"/>
</dbReference>
<dbReference type="CDD" id="cd01886">
    <property type="entry name" value="EF-G"/>
    <property type="match status" value="1"/>
</dbReference>
<dbReference type="CDD" id="cd16262">
    <property type="entry name" value="EFG_III"/>
    <property type="match status" value="1"/>
</dbReference>
<dbReference type="CDD" id="cd01434">
    <property type="entry name" value="EFG_mtEFG1_IV"/>
    <property type="match status" value="1"/>
</dbReference>
<dbReference type="CDD" id="cd04091">
    <property type="entry name" value="mtEFG1_II_like"/>
    <property type="match status" value="1"/>
</dbReference>
<dbReference type="FunFam" id="3.30.230.10:FF:000003">
    <property type="entry name" value="Elongation factor G"/>
    <property type="match status" value="1"/>
</dbReference>
<dbReference type="FunFam" id="3.30.70.870:FF:000001">
    <property type="entry name" value="Elongation factor G"/>
    <property type="match status" value="1"/>
</dbReference>
<dbReference type="FunFam" id="2.40.30.10:FF:000022">
    <property type="entry name" value="Elongation factor G, mitochondrial"/>
    <property type="match status" value="1"/>
</dbReference>
<dbReference type="FunFam" id="3.30.70.240:FF:000015">
    <property type="entry name" value="Elongation factor G, mitochondrial"/>
    <property type="match status" value="1"/>
</dbReference>
<dbReference type="FunFam" id="3.40.50.300:FF:000558">
    <property type="entry name" value="Elongation factor G, mitochondrial"/>
    <property type="match status" value="1"/>
</dbReference>
<dbReference type="Gene3D" id="3.30.230.10">
    <property type="match status" value="1"/>
</dbReference>
<dbReference type="Gene3D" id="3.30.70.240">
    <property type="match status" value="1"/>
</dbReference>
<dbReference type="Gene3D" id="3.30.70.870">
    <property type="entry name" value="Elongation Factor G (Translational Gtpase), domain 3"/>
    <property type="match status" value="1"/>
</dbReference>
<dbReference type="Gene3D" id="3.40.50.300">
    <property type="entry name" value="P-loop containing nucleotide triphosphate hydrolases"/>
    <property type="match status" value="1"/>
</dbReference>
<dbReference type="Gene3D" id="2.40.30.10">
    <property type="entry name" value="Translation factors"/>
    <property type="match status" value="1"/>
</dbReference>
<dbReference type="HAMAP" id="MF_00054_B">
    <property type="entry name" value="EF_G_EF_2_B"/>
    <property type="match status" value="1"/>
</dbReference>
<dbReference type="InterPro" id="IPR041095">
    <property type="entry name" value="EFG_II"/>
</dbReference>
<dbReference type="InterPro" id="IPR009022">
    <property type="entry name" value="EFG_III"/>
</dbReference>
<dbReference type="InterPro" id="IPR035647">
    <property type="entry name" value="EFG_III/V"/>
</dbReference>
<dbReference type="InterPro" id="IPR047872">
    <property type="entry name" value="EFG_IV"/>
</dbReference>
<dbReference type="InterPro" id="IPR000640">
    <property type="entry name" value="EFG_V-like"/>
</dbReference>
<dbReference type="InterPro" id="IPR004161">
    <property type="entry name" value="EFTu-like_2"/>
</dbReference>
<dbReference type="InterPro" id="IPR031157">
    <property type="entry name" value="G_TR_CS"/>
</dbReference>
<dbReference type="InterPro" id="IPR027417">
    <property type="entry name" value="P-loop_NTPase"/>
</dbReference>
<dbReference type="InterPro" id="IPR020568">
    <property type="entry name" value="Ribosomal_Su5_D2-typ_SF"/>
</dbReference>
<dbReference type="InterPro" id="IPR014721">
    <property type="entry name" value="Ribsml_uS5_D2-typ_fold_subgr"/>
</dbReference>
<dbReference type="InterPro" id="IPR005225">
    <property type="entry name" value="Small_GTP-bd"/>
</dbReference>
<dbReference type="InterPro" id="IPR000795">
    <property type="entry name" value="T_Tr_GTP-bd_dom"/>
</dbReference>
<dbReference type="InterPro" id="IPR009000">
    <property type="entry name" value="Transl_B-barrel_sf"/>
</dbReference>
<dbReference type="InterPro" id="IPR004540">
    <property type="entry name" value="Transl_elong_EFG/EF2"/>
</dbReference>
<dbReference type="InterPro" id="IPR005517">
    <property type="entry name" value="Transl_elong_EFG/EF2_IV"/>
</dbReference>
<dbReference type="NCBIfam" id="TIGR00484">
    <property type="entry name" value="EF-G"/>
    <property type="match status" value="1"/>
</dbReference>
<dbReference type="NCBIfam" id="NF009381">
    <property type="entry name" value="PRK12740.1-5"/>
    <property type="match status" value="1"/>
</dbReference>
<dbReference type="NCBIfam" id="TIGR00231">
    <property type="entry name" value="small_GTP"/>
    <property type="match status" value="1"/>
</dbReference>
<dbReference type="PANTHER" id="PTHR43636">
    <property type="entry name" value="ELONGATION FACTOR G, MITOCHONDRIAL"/>
    <property type="match status" value="1"/>
</dbReference>
<dbReference type="PANTHER" id="PTHR43636:SF2">
    <property type="entry name" value="ELONGATION FACTOR G, MITOCHONDRIAL"/>
    <property type="match status" value="1"/>
</dbReference>
<dbReference type="Pfam" id="PF00679">
    <property type="entry name" value="EFG_C"/>
    <property type="match status" value="1"/>
</dbReference>
<dbReference type="Pfam" id="PF14492">
    <property type="entry name" value="EFG_III"/>
    <property type="match status" value="1"/>
</dbReference>
<dbReference type="Pfam" id="PF03764">
    <property type="entry name" value="EFG_IV"/>
    <property type="match status" value="1"/>
</dbReference>
<dbReference type="Pfam" id="PF00009">
    <property type="entry name" value="GTP_EFTU"/>
    <property type="match status" value="1"/>
</dbReference>
<dbReference type="Pfam" id="PF03144">
    <property type="entry name" value="GTP_EFTU_D2"/>
    <property type="match status" value="1"/>
</dbReference>
<dbReference type="PRINTS" id="PR00315">
    <property type="entry name" value="ELONGATNFCT"/>
</dbReference>
<dbReference type="SMART" id="SM00838">
    <property type="entry name" value="EFG_C"/>
    <property type="match status" value="1"/>
</dbReference>
<dbReference type="SMART" id="SM00889">
    <property type="entry name" value="EFG_IV"/>
    <property type="match status" value="1"/>
</dbReference>
<dbReference type="SUPFAM" id="SSF54980">
    <property type="entry name" value="EF-G C-terminal domain-like"/>
    <property type="match status" value="2"/>
</dbReference>
<dbReference type="SUPFAM" id="SSF52540">
    <property type="entry name" value="P-loop containing nucleoside triphosphate hydrolases"/>
    <property type="match status" value="1"/>
</dbReference>
<dbReference type="SUPFAM" id="SSF54211">
    <property type="entry name" value="Ribosomal protein S5 domain 2-like"/>
    <property type="match status" value="1"/>
</dbReference>
<dbReference type="SUPFAM" id="SSF50447">
    <property type="entry name" value="Translation proteins"/>
    <property type="match status" value="1"/>
</dbReference>
<dbReference type="PROSITE" id="PS00301">
    <property type="entry name" value="G_TR_1"/>
    <property type="match status" value="1"/>
</dbReference>
<dbReference type="PROSITE" id="PS51722">
    <property type="entry name" value="G_TR_2"/>
    <property type="match status" value="1"/>
</dbReference>
<evidence type="ECO:0000255" key="1">
    <source>
        <dbReference type="HAMAP-Rule" id="MF_03061"/>
    </source>
</evidence>
<evidence type="ECO:0000305" key="2"/>
<protein>
    <recommendedName>
        <fullName evidence="1">Elongation factor G, mitochondrial</fullName>
        <shortName evidence="1">EF-Gmt</shortName>
    </recommendedName>
    <alternativeName>
        <fullName evidence="1">Elongation factor G 1, mitochondrial</fullName>
        <shortName evidence="1">mEF-G 1</shortName>
    </alternativeName>
    <alternativeName>
        <fullName evidence="1">Elongation factor G1</fullName>
    </alternativeName>
</protein>
<feature type="transit peptide" description="Mitochondrion" evidence="1">
    <location>
        <begin position="1"/>
        <end position="24"/>
    </location>
</feature>
<feature type="chain" id="PRO_0000385557" description="Elongation factor G, mitochondrial">
    <location>
        <begin position="25"/>
        <end position="802"/>
    </location>
</feature>
<feature type="domain" description="tr-type G">
    <location>
        <begin position="100"/>
        <end position="387"/>
    </location>
</feature>
<feature type="binding site" evidence="1">
    <location>
        <begin position="109"/>
        <end position="116"/>
    </location>
    <ligand>
        <name>GTP</name>
        <dbReference type="ChEBI" id="CHEBI:37565"/>
    </ligand>
</feature>
<feature type="binding site" evidence="1">
    <location>
        <begin position="185"/>
        <end position="189"/>
    </location>
    <ligand>
        <name>GTP</name>
        <dbReference type="ChEBI" id="CHEBI:37565"/>
    </ligand>
</feature>
<feature type="binding site" evidence="1">
    <location>
        <begin position="239"/>
        <end position="242"/>
    </location>
    <ligand>
        <name>GTP</name>
        <dbReference type="ChEBI" id="CHEBI:37565"/>
    </ligand>
</feature>
<comment type="function">
    <text evidence="1">Mitochondrial GTPase that catalyzes the GTP-dependent ribosomal translocation step during translation elongation. During this step, the ribosome changes from the pre-translocational (PRE) to the post-translocational (POST) state as the newly formed A-site-bound peptidyl-tRNA and P-site-bound deacylated tRNA move to the P and E sites, respectively. Catalyzes the coordinated movement of the two tRNA molecules, the mRNA and conformational changes in the ribosome.</text>
</comment>
<comment type="pathway">
    <text evidence="1">Protein biosynthesis; polypeptide chain elongation.</text>
</comment>
<comment type="subcellular location">
    <subcellularLocation>
        <location evidence="1">Mitochondrion</location>
    </subcellularLocation>
</comment>
<comment type="similarity">
    <text evidence="2">Belongs to the TRAFAC class translation factor GTPase superfamily. Classic translation factor GTPase family. EF-G/EF-2 subfamily.</text>
</comment>
<gene>
    <name type="primary">mef1</name>
    <name type="ORF">AFUB_065210</name>
</gene>
<sequence>MRCPSLARLPNRALSGLTRSPVRLQSQNFLYQRCASTAALRSPIAGPAYQSVFHRHNLQRRNASAATTAAVLEAAASNPDGLSQEAIIDNLDPAEAIRLSRLRNIGIAAHIDSGKTTCTERVLFYTGRIKAIHEVRGRDNVGAKMDSMDLEREKGITIQSAATFCDWIKKGDDGKEEKYHINLIDTPGHIDFTIEVERALRVLDGAVMILCAVSGVQSQTITVDRQMRRYNVPRISFVNKMDRMGANPFKAVEQINTKLKIPAAAVQVPIGAEDEFEGVVDLIRMKSIYNDGPNGETVVVKDEIPEKVKSVVEERRRMLIETLADVDDEIAELFLEETEPTEQQLKAAIRRATIGLKFTPVFMGSALANKSVQPMLDGVIDYLPNPSEVENLALDRKRDEASVKLVPYNSQPFVGLAFKLEESNFGQLTYIRVYQGTLRKGANVFNARNNKKVKVPRIVRMHSNEMEEVSEIGAGEICAVFGVDCASGDTFTDGQLGYTMTSMFVPEPVISLSIKPKNSKDSANFSKAMARFQREDPTFRVSYNAESEETLISGMGELHLDIYIERMRREYRVDCVTGPPQVAYRETIGNRVEFDHLLKKQSGGPGEYARVVGWMEPTGKLEDNKFEEQIVGGSISEKFLFACEKGFNLACEKGPLIGHKVLGTKMVINDGATHMTDSSEMSFKNATQQAFRKAFMESNPSVLEPMMKIAVTAPGEFQGDVISLLNKRNATINDTETGVDEFTVYADCSLNGMFGFSTHLRAATQGKGEFTMEFSHYEKAQPQLQKELIQKYLKAQADRHKK</sequence>
<keyword id="KW-0251">Elongation factor</keyword>
<keyword id="KW-0342">GTP-binding</keyword>
<keyword id="KW-0496">Mitochondrion</keyword>
<keyword id="KW-0547">Nucleotide-binding</keyword>
<keyword id="KW-0648">Protein biosynthesis</keyword>
<keyword id="KW-0809">Transit peptide</keyword>
<name>EFGM_ASPFC</name>
<accession>B0Y604</accession>